<accession>A7MWM0</accession>
<evidence type="ECO:0000255" key="1">
    <source>
        <dbReference type="HAMAP-Rule" id="MF_00048"/>
    </source>
</evidence>
<proteinExistence type="inferred from homology"/>
<sequence>MGLFSKRQIGNQYETLAKQYLQRQGLRFLDQNFLTKVGEIDLIFQQGETIVFVEVKYRKNDSFGSAAEMVTRAKMRKLVKTAQIWLSQQKRSAYNIDYRFDVVAIHDSGRDINWIQNAISEG</sequence>
<comment type="similarity">
    <text evidence="1">Belongs to the UPF0102 family.</text>
</comment>
<reference key="1">
    <citation type="submission" date="2007-08" db="EMBL/GenBank/DDBJ databases">
        <authorList>
            <consortium name="The Vibrio harveyi Genome Sequencing Project"/>
            <person name="Bassler B."/>
            <person name="Clifton S.W."/>
            <person name="Fulton L."/>
            <person name="Delehaunty K."/>
            <person name="Fronick C."/>
            <person name="Harrison M."/>
            <person name="Markivic C."/>
            <person name="Fulton R."/>
            <person name="Tin-Wollam A.-M."/>
            <person name="Shah N."/>
            <person name="Pepin K."/>
            <person name="Nash W."/>
            <person name="Thiruvilangam P."/>
            <person name="Bhonagiri V."/>
            <person name="Waters C."/>
            <person name="Tu K.C."/>
            <person name="Irgon J."/>
            <person name="Wilson R.K."/>
        </authorList>
    </citation>
    <scope>NUCLEOTIDE SEQUENCE [LARGE SCALE GENOMIC DNA]</scope>
    <source>
        <strain>ATCC BAA-1116 / BB120</strain>
    </source>
</reference>
<feature type="chain" id="PRO_1000009275" description="UPF0102 protein VIBHAR_00890">
    <location>
        <begin position="1"/>
        <end position="122"/>
    </location>
</feature>
<organism>
    <name type="scientific">Vibrio campbellii (strain ATCC BAA-1116)</name>
    <dbReference type="NCBI Taxonomy" id="2902295"/>
    <lineage>
        <taxon>Bacteria</taxon>
        <taxon>Pseudomonadati</taxon>
        <taxon>Pseudomonadota</taxon>
        <taxon>Gammaproteobacteria</taxon>
        <taxon>Vibrionales</taxon>
        <taxon>Vibrionaceae</taxon>
        <taxon>Vibrio</taxon>
    </lineage>
</organism>
<protein>
    <recommendedName>
        <fullName evidence="1">UPF0102 protein VIBHAR_00890</fullName>
    </recommendedName>
</protein>
<gene>
    <name type="ordered locus">VIBHAR_00890</name>
</gene>
<name>Y890_VIBC1</name>
<dbReference type="EMBL" id="CP000789">
    <property type="protein sequence ID" value="ABU69890.1"/>
    <property type="molecule type" value="Genomic_DNA"/>
</dbReference>
<dbReference type="RefSeq" id="WP_005428580.1">
    <property type="nucleotide sequence ID" value="NC_022269.1"/>
</dbReference>
<dbReference type="SMR" id="A7MWM0"/>
<dbReference type="KEGG" id="vha:VIBHAR_00890"/>
<dbReference type="PATRIC" id="fig|338187.25.peg.1727"/>
<dbReference type="Proteomes" id="UP000008152">
    <property type="component" value="Chromosome I"/>
</dbReference>
<dbReference type="GO" id="GO:0003676">
    <property type="term" value="F:nucleic acid binding"/>
    <property type="evidence" value="ECO:0007669"/>
    <property type="project" value="InterPro"/>
</dbReference>
<dbReference type="CDD" id="cd20736">
    <property type="entry name" value="PoNe_Nuclease"/>
    <property type="match status" value="1"/>
</dbReference>
<dbReference type="Gene3D" id="3.40.1350.10">
    <property type="match status" value="1"/>
</dbReference>
<dbReference type="HAMAP" id="MF_00048">
    <property type="entry name" value="UPF0102"/>
    <property type="match status" value="1"/>
</dbReference>
<dbReference type="InterPro" id="IPR011335">
    <property type="entry name" value="Restrct_endonuc-II-like"/>
</dbReference>
<dbReference type="InterPro" id="IPR011856">
    <property type="entry name" value="tRNA_endonuc-like_dom_sf"/>
</dbReference>
<dbReference type="InterPro" id="IPR003509">
    <property type="entry name" value="UPF0102_YraN-like"/>
</dbReference>
<dbReference type="NCBIfam" id="NF009150">
    <property type="entry name" value="PRK12497.1-3"/>
    <property type="match status" value="1"/>
</dbReference>
<dbReference type="NCBIfam" id="TIGR00252">
    <property type="entry name" value="YraN family protein"/>
    <property type="match status" value="1"/>
</dbReference>
<dbReference type="PANTHER" id="PTHR34039">
    <property type="entry name" value="UPF0102 PROTEIN YRAN"/>
    <property type="match status" value="1"/>
</dbReference>
<dbReference type="PANTHER" id="PTHR34039:SF1">
    <property type="entry name" value="UPF0102 PROTEIN YRAN"/>
    <property type="match status" value="1"/>
</dbReference>
<dbReference type="Pfam" id="PF02021">
    <property type="entry name" value="UPF0102"/>
    <property type="match status" value="1"/>
</dbReference>
<dbReference type="SUPFAM" id="SSF52980">
    <property type="entry name" value="Restriction endonuclease-like"/>
    <property type="match status" value="1"/>
</dbReference>